<keyword id="KW-0066">ATP synthesis</keyword>
<keyword id="KW-0067">ATP-binding</keyword>
<keyword id="KW-1003">Cell membrane</keyword>
<keyword id="KW-0139">CF(1)</keyword>
<keyword id="KW-0375">Hydrogen ion transport</keyword>
<keyword id="KW-0406">Ion transport</keyword>
<keyword id="KW-0472">Membrane</keyword>
<keyword id="KW-0547">Nucleotide-binding</keyword>
<keyword id="KW-1278">Translocase</keyword>
<keyword id="KW-0813">Transport</keyword>
<protein>
    <recommendedName>
        <fullName evidence="1">ATP synthase subunit alpha</fullName>
        <ecNumber evidence="1">7.1.2.2</ecNumber>
    </recommendedName>
    <alternativeName>
        <fullName evidence="1">ATP synthase F1 sector subunit alpha</fullName>
    </alternativeName>
    <alternativeName>
        <fullName evidence="1">F-ATPase subunit alpha</fullName>
    </alternativeName>
</protein>
<sequence>MAEVNPAEVSAILKQQLSGFESKASLDEVGTVLTVGDGIANVYGLANAQYGELVQFESGLEGIVLNLEEDNVGVVLLGPANEIKESSTVKRTQRIASINVGEGIVGRVVDTLGAPIDGKGAIEGETFEMPLERKAPGVIYRQPVTEPLQTGIKSIDAMVPVGRGQRELVIGDRQTGKTTVCIDTILNQKEFYDAGEPVYCIYVAIGQKASTVAAIAKTLEDKGALAYTTIVAANASDPAPMQVYAPFAGAAIGEYFRDTGRPALIVFDDLSKQAVAYREVSLLLRRPPGREAYPGDVFFLHSRLLERSAKVIDDDGIAKQMNDLPESLKDKVKGGGSLTALPIIETQAGDVSAYIPTNVISITDGQIFLTSDLFNSGVRPAIDVGISVSRVGGNAQIKSMKKVAGTLKLDQAQYRELEAFAKFGSDLDPTTMSVISKGKRNVEILKQGQNDPYPVENQIAIIYAGSKNLLRDVPVEKVKEFERDYLAYLDTKHRDTLDTLKAGKLTDEVIDTLTQTAKELSAKYKN</sequence>
<comment type="function">
    <text evidence="1">Produces ATP from ADP in the presence of a proton gradient across the membrane. The alpha chain is a regulatory subunit.</text>
</comment>
<comment type="catalytic activity">
    <reaction evidence="1">
        <text>ATP + H2O + 4 H(+)(in) = ADP + phosphate + 5 H(+)(out)</text>
        <dbReference type="Rhea" id="RHEA:57720"/>
        <dbReference type="ChEBI" id="CHEBI:15377"/>
        <dbReference type="ChEBI" id="CHEBI:15378"/>
        <dbReference type="ChEBI" id="CHEBI:30616"/>
        <dbReference type="ChEBI" id="CHEBI:43474"/>
        <dbReference type="ChEBI" id="CHEBI:456216"/>
        <dbReference type="EC" id="7.1.2.2"/>
    </reaction>
</comment>
<comment type="subunit">
    <text evidence="1">F-type ATPases have 2 components, CF(1) - the catalytic core - and CF(0) - the membrane proton channel. CF(1) has five subunits: alpha(3), beta(3), gamma(1), delta(1), epsilon(1). CF(0) has three main subunits: a(1), b(2) and c(9-12). The alpha and beta chains form an alternating ring which encloses part of the gamma chain. CF(1) is attached to CF(0) by a central stalk formed by the gamma and epsilon chains, while a peripheral stalk is formed by the delta and b chains.</text>
</comment>
<comment type="subcellular location">
    <subcellularLocation>
        <location evidence="1">Cell membrane</location>
        <topology evidence="1">Peripheral membrane protein</topology>
    </subcellularLocation>
</comment>
<comment type="similarity">
    <text evidence="1">Belongs to the ATPase alpha/beta chains family.</text>
</comment>
<accession>A0M6G4</accession>
<dbReference type="EC" id="7.1.2.2" evidence="1"/>
<dbReference type="EMBL" id="CU207366">
    <property type="protein sequence ID" value="CAL68209.1"/>
    <property type="molecule type" value="Genomic_DNA"/>
</dbReference>
<dbReference type="RefSeq" id="WP_011711110.1">
    <property type="nucleotide sequence ID" value="NC_008571.1"/>
</dbReference>
<dbReference type="SMR" id="A0M6G4"/>
<dbReference type="STRING" id="411154.GFO_3266"/>
<dbReference type="KEGG" id="gfo:GFO_3266"/>
<dbReference type="eggNOG" id="COG0056">
    <property type="taxonomic scope" value="Bacteria"/>
</dbReference>
<dbReference type="HOGENOM" id="CLU_010091_2_1_10"/>
<dbReference type="OrthoDB" id="9803053at2"/>
<dbReference type="Proteomes" id="UP000000755">
    <property type="component" value="Chromosome"/>
</dbReference>
<dbReference type="GO" id="GO:0005886">
    <property type="term" value="C:plasma membrane"/>
    <property type="evidence" value="ECO:0007669"/>
    <property type="project" value="UniProtKB-SubCell"/>
</dbReference>
<dbReference type="GO" id="GO:0045259">
    <property type="term" value="C:proton-transporting ATP synthase complex"/>
    <property type="evidence" value="ECO:0007669"/>
    <property type="project" value="UniProtKB-KW"/>
</dbReference>
<dbReference type="GO" id="GO:0043531">
    <property type="term" value="F:ADP binding"/>
    <property type="evidence" value="ECO:0007669"/>
    <property type="project" value="TreeGrafter"/>
</dbReference>
<dbReference type="GO" id="GO:0005524">
    <property type="term" value="F:ATP binding"/>
    <property type="evidence" value="ECO:0007669"/>
    <property type="project" value="UniProtKB-UniRule"/>
</dbReference>
<dbReference type="GO" id="GO:0046933">
    <property type="term" value="F:proton-transporting ATP synthase activity, rotational mechanism"/>
    <property type="evidence" value="ECO:0007669"/>
    <property type="project" value="UniProtKB-UniRule"/>
</dbReference>
<dbReference type="CDD" id="cd18113">
    <property type="entry name" value="ATP-synt_F1_alpha_C"/>
    <property type="match status" value="1"/>
</dbReference>
<dbReference type="CDD" id="cd18116">
    <property type="entry name" value="ATP-synt_F1_alpha_N"/>
    <property type="match status" value="1"/>
</dbReference>
<dbReference type="CDD" id="cd01132">
    <property type="entry name" value="F1-ATPase_alpha_CD"/>
    <property type="match status" value="1"/>
</dbReference>
<dbReference type="FunFam" id="1.20.150.20:FF:000001">
    <property type="entry name" value="ATP synthase subunit alpha"/>
    <property type="match status" value="1"/>
</dbReference>
<dbReference type="FunFam" id="2.40.30.20:FF:000001">
    <property type="entry name" value="ATP synthase subunit alpha"/>
    <property type="match status" value="1"/>
</dbReference>
<dbReference type="FunFam" id="3.40.50.300:FF:000002">
    <property type="entry name" value="ATP synthase subunit alpha"/>
    <property type="match status" value="1"/>
</dbReference>
<dbReference type="Gene3D" id="2.40.30.20">
    <property type="match status" value="1"/>
</dbReference>
<dbReference type="Gene3D" id="1.20.150.20">
    <property type="entry name" value="ATP synthase alpha/beta chain, C-terminal domain"/>
    <property type="match status" value="1"/>
</dbReference>
<dbReference type="Gene3D" id="3.40.50.300">
    <property type="entry name" value="P-loop containing nucleotide triphosphate hydrolases"/>
    <property type="match status" value="1"/>
</dbReference>
<dbReference type="HAMAP" id="MF_01346">
    <property type="entry name" value="ATP_synth_alpha_bact"/>
    <property type="match status" value="1"/>
</dbReference>
<dbReference type="InterPro" id="IPR023366">
    <property type="entry name" value="ATP_synth_asu-like_sf"/>
</dbReference>
<dbReference type="InterPro" id="IPR000793">
    <property type="entry name" value="ATP_synth_asu_C"/>
</dbReference>
<dbReference type="InterPro" id="IPR038376">
    <property type="entry name" value="ATP_synth_asu_C_sf"/>
</dbReference>
<dbReference type="InterPro" id="IPR033732">
    <property type="entry name" value="ATP_synth_F1_a_nt-bd_dom"/>
</dbReference>
<dbReference type="InterPro" id="IPR005294">
    <property type="entry name" value="ATP_synth_F1_asu"/>
</dbReference>
<dbReference type="InterPro" id="IPR020003">
    <property type="entry name" value="ATPase_a/bsu_AS"/>
</dbReference>
<dbReference type="InterPro" id="IPR004100">
    <property type="entry name" value="ATPase_F1/V1/A1_a/bsu_N"/>
</dbReference>
<dbReference type="InterPro" id="IPR036121">
    <property type="entry name" value="ATPase_F1/V1/A1_a/bsu_N_sf"/>
</dbReference>
<dbReference type="InterPro" id="IPR000194">
    <property type="entry name" value="ATPase_F1/V1/A1_a/bsu_nucl-bd"/>
</dbReference>
<dbReference type="InterPro" id="IPR027417">
    <property type="entry name" value="P-loop_NTPase"/>
</dbReference>
<dbReference type="NCBIfam" id="TIGR00962">
    <property type="entry name" value="atpA"/>
    <property type="match status" value="1"/>
</dbReference>
<dbReference type="NCBIfam" id="NF009884">
    <property type="entry name" value="PRK13343.1"/>
    <property type="match status" value="1"/>
</dbReference>
<dbReference type="PANTHER" id="PTHR48082">
    <property type="entry name" value="ATP SYNTHASE SUBUNIT ALPHA, MITOCHONDRIAL"/>
    <property type="match status" value="1"/>
</dbReference>
<dbReference type="PANTHER" id="PTHR48082:SF2">
    <property type="entry name" value="ATP SYNTHASE SUBUNIT ALPHA, MITOCHONDRIAL"/>
    <property type="match status" value="1"/>
</dbReference>
<dbReference type="Pfam" id="PF00006">
    <property type="entry name" value="ATP-synt_ab"/>
    <property type="match status" value="1"/>
</dbReference>
<dbReference type="Pfam" id="PF00306">
    <property type="entry name" value="ATP-synt_ab_C"/>
    <property type="match status" value="1"/>
</dbReference>
<dbReference type="Pfam" id="PF02874">
    <property type="entry name" value="ATP-synt_ab_N"/>
    <property type="match status" value="1"/>
</dbReference>
<dbReference type="PIRSF" id="PIRSF039088">
    <property type="entry name" value="F_ATPase_subunit_alpha"/>
    <property type="match status" value="1"/>
</dbReference>
<dbReference type="SUPFAM" id="SSF47917">
    <property type="entry name" value="C-terminal domain of alpha and beta subunits of F1 ATP synthase"/>
    <property type="match status" value="1"/>
</dbReference>
<dbReference type="SUPFAM" id="SSF50615">
    <property type="entry name" value="N-terminal domain of alpha and beta subunits of F1 ATP synthase"/>
    <property type="match status" value="1"/>
</dbReference>
<dbReference type="SUPFAM" id="SSF52540">
    <property type="entry name" value="P-loop containing nucleoside triphosphate hydrolases"/>
    <property type="match status" value="1"/>
</dbReference>
<dbReference type="PROSITE" id="PS00152">
    <property type="entry name" value="ATPASE_ALPHA_BETA"/>
    <property type="match status" value="1"/>
</dbReference>
<organism>
    <name type="scientific">Christiangramia forsetii (strain DSM 17595 / CGMCC 1.15422 / KT0803)</name>
    <name type="common">Gramella forsetii</name>
    <dbReference type="NCBI Taxonomy" id="411154"/>
    <lineage>
        <taxon>Bacteria</taxon>
        <taxon>Pseudomonadati</taxon>
        <taxon>Bacteroidota</taxon>
        <taxon>Flavobacteriia</taxon>
        <taxon>Flavobacteriales</taxon>
        <taxon>Flavobacteriaceae</taxon>
        <taxon>Christiangramia</taxon>
    </lineage>
</organism>
<proteinExistence type="inferred from homology"/>
<evidence type="ECO:0000255" key="1">
    <source>
        <dbReference type="HAMAP-Rule" id="MF_01346"/>
    </source>
</evidence>
<feature type="chain" id="PRO_1000073355" description="ATP synthase subunit alpha">
    <location>
        <begin position="1"/>
        <end position="526"/>
    </location>
</feature>
<feature type="binding site" evidence="1">
    <location>
        <begin position="171"/>
        <end position="178"/>
    </location>
    <ligand>
        <name>ATP</name>
        <dbReference type="ChEBI" id="CHEBI:30616"/>
    </ligand>
</feature>
<feature type="site" description="Required for activity" evidence="1">
    <location>
        <position position="387"/>
    </location>
</feature>
<gene>
    <name evidence="1" type="primary">atpA</name>
    <name type="ordered locus">GFO_3266</name>
</gene>
<name>ATPA_CHRFK</name>
<reference key="1">
    <citation type="journal article" date="2006" name="Environ. Microbiol.">
        <title>Whole genome analysis of the marine Bacteroidetes'Gramella forsetii' reveals adaptations to degradation of polymeric organic matter.</title>
        <authorList>
            <person name="Bauer M."/>
            <person name="Kube M."/>
            <person name="Teeling H."/>
            <person name="Richter M."/>
            <person name="Lombardot T."/>
            <person name="Allers E."/>
            <person name="Wuerdemann C.A."/>
            <person name="Quast C."/>
            <person name="Kuhl H."/>
            <person name="Knaust F."/>
            <person name="Woebken D."/>
            <person name="Bischof K."/>
            <person name="Mussmann M."/>
            <person name="Choudhuri J.V."/>
            <person name="Meyer F."/>
            <person name="Reinhardt R."/>
            <person name="Amann R.I."/>
            <person name="Gloeckner F.O."/>
        </authorList>
    </citation>
    <scope>NUCLEOTIDE SEQUENCE [LARGE SCALE GENOMIC DNA]</scope>
    <source>
        <strain>DSM 17595 / CGMCC 1.15422 / KT0803</strain>
    </source>
</reference>